<feature type="chain" id="PRO_1000046880" description="Large ribosomal subunit protein eL40">
    <location>
        <begin position="1"/>
        <end position="48"/>
    </location>
</feature>
<accession>A7I4U9</accession>
<protein>
    <recommendedName>
        <fullName evidence="1">Large ribosomal subunit protein eL40</fullName>
    </recommendedName>
    <alternativeName>
        <fullName evidence="2">50S ribosomal protein L40e</fullName>
    </alternativeName>
</protein>
<proteinExistence type="inferred from homology"/>
<reference key="1">
    <citation type="journal article" date="2015" name="Microbiology">
        <title>Genome of Methanoregula boonei 6A8 reveals adaptations to oligotrophic peatland environments.</title>
        <authorList>
            <person name="Braeuer S."/>
            <person name="Cadillo-Quiroz H."/>
            <person name="Kyrpides N."/>
            <person name="Woyke T."/>
            <person name="Goodwin L."/>
            <person name="Detter C."/>
            <person name="Podell S."/>
            <person name="Yavitt J.B."/>
            <person name="Zinder S.H."/>
        </authorList>
    </citation>
    <scope>NUCLEOTIDE SEQUENCE [LARGE SCALE GENOMIC DNA]</scope>
    <source>
        <strain>DSM 21154 / JCM 14090 / 6A8</strain>
    </source>
</reference>
<name>RL40_METB6</name>
<organism>
    <name type="scientific">Methanoregula boonei (strain DSM 21154 / JCM 14090 / 6A8)</name>
    <dbReference type="NCBI Taxonomy" id="456442"/>
    <lineage>
        <taxon>Archaea</taxon>
        <taxon>Methanobacteriati</taxon>
        <taxon>Methanobacteriota</taxon>
        <taxon>Stenosarchaea group</taxon>
        <taxon>Methanomicrobia</taxon>
        <taxon>Methanomicrobiales</taxon>
        <taxon>Methanoregulaceae</taxon>
        <taxon>Methanoregula</taxon>
    </lineage>
</organism>
<sequence>MAKFPEAEARLLNVKICMHCNARNAIRATTCRKCGYKNLRPKNKERKA</sequence>
<dbReference type="EMBL" id="CP000780">
    <property type="protein sequence ID" value="ABS54760.1"/>
    <property type="molecule type" value="Genomic_DNA"/>
</dbReference>
<dbReference type="SMR" id="A7I4U9"/>
<dbReference type="STRING" id="456442.Mboo_0238"/>
<dbReference type="KEGG" id="mbn:Mboo_0238"/>
<dbReference type="eggNOG" id="arCOG04049">
    <property type="taxonomic scope" value="Archaea"/>
</dbReference>
<dbReference type="HOGENOM" id="CLU_205640_0_0_2"/>
<dbReference type="OrthoDB" id="45138at2157"/>
<dbReference type="Proteomes" id="UP000002408">
    <property type="component" value="Chromosome"/>
</dbReference>
<dbReference type="GO" id="GO:1990904">
    <property type="term" value="C:ribonucleoprotein complex"/>
    <property type="evidence" value="ECO:0007669"/>
    <property type="project" value="UniProtKB-KW"/>
</dbReference>
<dbReference type="GO" id="GO:0005840">
    <property type="term" value="C:ribosome"/>
    <property type="evidence" value="ECO:0007669"/>
    <property type="project" value="UniProtKB-KW"/>
</dbReference>
<dbReference type="GO" id="GO:0003735">
    <property type="term" value="F:structural constituent of ribosome"/>
    <property type="evidence" value="ECO:0007669"/>
    <property type="project" value="InterPro"/>
</dbReference>
<dbReference type="GO" id="GO:0006412">
    <property type="term" value="P:translation"/>
    <property type="evidence" value="ECO:0007669"/>
    <property type="project" value="UniProtKB-UniRule"/>
</dbReference>
<dbReference type="Gene3D" id="4.10.1060.50">
    <property type="match status" value="1"/>
</dbReference>
<dbReference type="HAMAP" id="MF_00788">
    <property type="entry name" value="Ribosomal_eL40"/>
    <property type="match status" value="1"/>
</dbReference>
<dbReference type="InterPro" id="IPR023657">
    <property type="entry name" value="Ribosomal_eL40_arc"/>
</dbReference>
<dbReference type="InterPro" id="IPR001975">
    <property type="entry name" value="Ribosomal_eL40_dom"/>
</dbReference>
<dbReference type="InterPro" id="IPR038587">
    <property type="entry name" value="Ribosomal_eL40_sf"/>
</dbReference>
<dbReference type="InterPro" id="IPR011332">
    <property type="entry name" value="Ribosomal_zn-bd"/>
</dbReference>
<dbReference type="NCBIfam" id="NF003161">
    <property type="entry name" value="PRK04136.1"/>
    <property type="match status" value="1"/>
</dbReference>
<dbReference type="PANTHER" id="PTHR39649">
    <property type="entry name" value="50S RIBOSOMAL PROTEIN L40E"/>
    <property type="match status" value="1"/>
</dbReference>
<dbReference type="PANTHER" id="PTHR39649:SF1">
    <property type="entry name" value="LARGE RIBOSOMAL SUBUNIT PROTEIN EL40"/>
    <property type="match status" value="1"/>
</dbReference>
<dbReference type="Pfam" id="PF01020">
    <property type="entry name" value="Ribosomal_L40e"/>
    <property type="match status" value="1"/>
</dbReference>
<dbReference type="SMART" id="SM01377">
    <property type="entry name" value="Ribosomal_L40e"/>
    <property type="match status" value="1"/>
</dbReference>
<dbReference type="SUPFAM" id="SSF57829">
    <property type="entry name" value="Zn-binding ribosomal proteins"/>
    <property type="match status" value="1"/>
</dbReference>
<comment type="similarity">
    <text evidence="1">Belongs to the eukaryotic ribosomal protein eL40 family.</text>
</comment>
<evidence type="ECO:0000255" key="1">
    <source>
        <dbReference type="HAMAP-Rule" id="MF_00788"/>
    </source>
</evidence>
<evidence type="ECO:0000305" key="2"/>
<gene>
    <name evidence="1" type="primary">rpl40e</name>
    <name type="ordered locus">Mboo_0238</name>
</gene>
<keyword id="KW-1185">Reference proteome</keyword>
<keyword id="KW-0687">Ribonucleoprotein</keyword>
<keyword id="KW-0689">Ribosomal protein</keyword>